<gene>
    <name type="primary">hisZ</name>
    <name type="ordered locus">MW2599</name>
</gene>
<name>HISZ_STAAW</name>
<dbReference type="EMBL" id="BA000033">
    <property type="protein sequence ID" value="BAB96464.1"/>
    <property type="molecule type" value="Genomic_DNA"/>
</dbReference>
<dbReference type="RefSeq" id="WP_001065591.1">
    <property type="nucleotide sequence ID" value="NC_003923.1"/>
</dbReference>
<dbReference type="SMR" id="P64381"/>
<dbReference type="KEGG" id="sam:MW2599"/>
<dbReference type="HOGENOM" id="CLU_089652_0_0_9"/>
<dbReference type="UniPathway" id="UPA00031">
    <property type="reaction ID" value="UER00006"/>
</dbReference>
<dbReference type="GO" id="GO:0005737">
    <property type="term" value="C:cytoplasm"/>
    <property type="evidence" value="ECO:0007669"/>
    <property type="project" value="UniProtKB-SubCell"/>
</dbReference>
<dbReference type="GO" id="GO:0140096">
    <property type="term" value="F:catalytic activity, acting on a protein"/>
    <property type="evidence" value="ECO:0007669"/>
    <property type="project" value="UniProtKB-ARBA"/>
</dbReference>
<dbReference type="GO" id="GO:0016740">
    <property type="term" value="F:transferase activity"/>
    <property type="evidence" value="ECO:0007669"/>
    <property type="project" value="UniProtKB-ARBA"/>
</dbReference>
<dbReference type="GO" id="GO:0000105">
    <property type="term" value="P:L-histidine biosynthetic process"/>
    <property type="evidence" value="ECO:0007669"/>
    <property type="project" value="UniProtKB-UniRule"/>
</dbReference>
<dbReference type="Gene3D" id="3.30.930.10">
    <property type="entry name" value="Bira Bifunctional Protein, Domain 2"/>
    <property type="match status" value="1"/>
</dbReference>
<dbReference type="HAMAP" id="MF_00125">
    <property type="entry name" value="HisZ"/>
    <property type="match status" value="1"/>
</dbReference>
<dbReference type="InterPro" id="IPR045864">
    <property type="entry name" value="aa-tRNA-synth_II/BPL/LPL"/>
</dbReference>
<dbReference type="InterPro" id="IPR041715">
    <property type="entry name" value="HisRS-like_core"/>
</dbReference>
<dbReference type="InterPro" id="IPR004517">
    <property type="entry name" value="HisZ"/>
</dbReference>
<dbReference type="NCBIfam" id="NF008947">
    <property type="entry name" value="PRK12294.1"/>
    <property type="match status" value="1"/>
</dbReference>
<dbReference type="Pfam" id="PF13393">
    <property type="entry name" value="tRNA-synt_His"/>
    <property type="match status" value="1"/>
</dbReference>
<dbReference type="SUPFAM" id="SSF55681">
    <property type="entry name" value="Class II aaRS and biotin synthetases"/>
    <property type="match status" value="1"/>
</dbReference>
<sequence>MNNSEQLIALKESETAFLKYFNKADYELVDFSVVEKLDWKQLNHEDLQQMGERNFWQHEHQIYALRNDFTDQLLRYYSMYPTAATKVAYTGLIIRNNEAAVQVGLENYAPSLANVQQSLKLFIQFIQQQLRDNVHFVVLGHYQLLDALLDKSLQTPDILSMIEERNLSGLVTYLSTEHPIVQILKENTQQQLNVLEHYIPNDHPALVELKIWERWLHTQGYKDIHLDITAQPPRSYYTGLFIQCHFAENESRVLTGGYYKGSIEGFGLGLTL</sequence>
<evidence type="ECO:0000250" key="1"/>
<evidence type="ECO:0000305" key="2"/>
<keyword id="KW-0028">Amino-acid biosynthesis</keyword>
<keyword id="KW-0963">Cytoplasm</keyword>
<keyword id="KW-0368">Histidine biosynthesis</keyword>
<feature type="chain" id="PRO_0000171064" description="ATP phosphoribosyltransferase regulatory subunit">
    <location>
        <begin position="1"/>
        <end position="272"/>
    </location>
</feature>
<proteinExistence type="inferred from homology"/>
<comment type="function">
    <text evidence="1">Required for the first step of histidine biosynthesis. May allow the feedback regulation of ATP phosphoribosyltransferase activity by histidine (By similarity).</text>
</comment>
<comment type="pathway">
    <text>Amino-acid biosynthesis; L-histidine biosynthesis; L-histidine from 5-phospho-alpha-D-ribose 1-diphosphate: step 1/9.</text>
</comment>
<comment type="subunit">
    <text evidence="1">Heteromultimer composed of HisG and HisZ subunits.</text>
</comment>
<comment type="subcellular location">
    <subcellularLocation>
        <location evidence="1">Cytoplasm</location>
    </subcellularLocation>
</comment>
<comment type="miscellaneous">
    <text>This function is generally fulfilled by the C-terminal part of HisG, which is missing in some bacteria such as this one.</text>
</comment>
<comment type="similarity">
    <text evidence="2">Belongs to the class-II aminoacyl-tRNA synthetase family. HisZ subfamily.</text>
</comment>
<accession>P64381</accession>
<accession>Q99QW1</accession>
<reference key="1">
    <citation type="journal article" date="2002" name="Lancet">
        <title>Genome and virulence determinants of high virulence community-acquired MRSA.</title>
        <authorList>
            <person name="Baba T."/>
            <person name="Takeuchi F."/>
            <person name="Kuroda M."/>
            <person name="Yuzawa H."/>
            <person name="Aoki K."/>
            <person name="Oguchi A."/>
            <person name="Nagai Y."/>
            <person name="Iwama N."/>
            <person name="Asano K."/>
            <person name="Naimi T."/>
            <person name="Kuroda H."/>
            <person name="Cui L."/>
            <person name="Yamamoto K."/>
            <person name="Hiramatsu K."/>
        </authorList>
    </citation>
    <scope>NUCLEOTIDE SEQUENCE [LARGE SCALE GENOMIC DNA]</scope>
    <source>
        <strain>MW2</strain>
    </source>
</reference>
<protein>
    <recommendedName>
        <fullName>ATP phosphoribosyltransferase regulatory subunit</fullName>
    </recommendedName>
</protein>
<organism>
    <name type="scientific">Staphylococcus aureus (strain MW2)</name>
    <dbReference type="NCBI Taxonomy" id="196620"/>
    <lineage>
        <taxon>Bacteria</taxon>
        <taxon>Bacillati</taxon>
        <taxon>Bacillota</taxon>
        <taxon>Bacilli</taxon>
        <taxon>Bacillales</taxon>
        <taxon>Staphylococcaceae</taxon>
        <taxon>Staphylococcus</taxon>
    </lineage>
</organism>